<gene>
    <name type="primary">imm2</name>
    <name type="ordered locus">PA1151</name>
</gene>
<reference key="1">
    <citation type="journal article" date="1993" name="J. Bacteriol.">
        <title>Molecular structures and functions of pyocins S1 and S2 in Pseudomonas aeruginosa.</title>
        <authorList>
            <person name="Sano Y."/>
            <person name="Matsui H."/>
            <person name="Kobayashi M."/>
            <person name="Kageyama M."/>
        </authorList>
    </citation>
    <scope>NUCLEOTIDE SEQUENCE [GENOMIC DNA]</scope>
    <scope>PROTEIN SEQUENCE OF 1-20</scope>
    <source>
        <strain>PAO</strain>
    </source>
</reference>
<reference key="2">
    <citation type="journal article" date="2000" name="Nature">
        <title>Complete genome sequence of Pseudomonas aeruginosa PAO1, an opportunistic pathogen.</title>
        <authorList>
            <person name="Stover C.K."/>
            <person name="Pham X.-Q.T."/>
            <person name="Erwin A.L."/>
            <person name="Mizoguchi S.D."/>
            <person name="Warrener P."/>
            <person name="Hickey M.J."/>
            <person name="Brinkman F.S.L."/>
            <person name="Hufnagle W.O."/>
            <person name="Kowalik D.J."/>
            <person name="Lagrou M."/>
            <person name="Garber R.L."/>
            <person name="Goltry L."/>
            <person name="Tolentino E."/>
            <person name="Westbrock-Wadman S."/>
            <person name="Yuan Y."/>
            <person name="Brody L.L."/>
            <person name="Coulter S.N."/>
            <person name="Folger K.R."/>
            <person name="Kas A."/>
            <person name="Larbig K."/>
            <person name="Lim R.M."/>
            <person name="Smith K.A."/>
            <person name="Spencer D.H."/>
            <person name="Wong G.K.-S."/>
            <person name="Wu Z."/>
            <person name="Paulsen I.T."/>
            <person name="Reizer J."/>
            <person name="Saier M.H. Jr."/>
            <person name="Hancock R.E.W."/>
            <person name="Lory S."/>
            <person name="Olson M.V."/>
        </authorList>
    </citation>
    <scope>NUCLEOTIDE SEQUENCE [LARGE SCALE GENOMIC DNA]</scope>
    <source>
        <strain>ATCC 15692 / DSM 22644 / CIP 104116 / JCM 14847 / LMG 12228 / 1C / PRS 101 / PAO1</strain>
    </source>
</reference>
<keyword id="KW-0002">3D-structure</keyword>
<keyword id="KW-0079">Bacteriocin immunity</keyword>
<keyword id="KW-0903">Direct protein sequencing</keyword>
<keyword id="KW-1185">Reference proteome</keyword>
<sequence>MKSKISEYTEKEFLEFVKDIYTNNKKKFPTEESHIQAVLEFKKLTEHPSGSDLLYYPNENREDSPAGVVKEVKEWRASKGLPGFKAG</sequence>
<feature type="chain" id="PRO_0000218713" description="Pyocin-S2 immunity protein">
    <location>
        <begin position="1"/>
        <end position="87"/>
    </location>
</feature>
<feature type="helix" evidence="2">
    <location>
        <begin position="5"/>
        <end position="7"/>
    </location>
</feature>
<feature type="helix" evidence="2">
    <location>
        <begin position="10"/>
        <end position="21"/>
    </location>
</feature>
<feature type="turn" evidence="2">
    <location>
        <begin position="25"/>
        <end position="27"/>
    </location>
</feature>
<feature type="helix" evidence="2">
    <location>
        <begin position="31"/>
        <end position="45"/>
    </location>
</feature>
<feature type="turn" evidence="2">
    <location>
        <begin position="48"/>
        <end position="51"/>
    </location>
</feature>
<feature type="helix" evidence="2">
    <location>
        <begin position="52"/>
        <end position="55"/>
    </location>
</feature>
<feature type="helix" evidence="2">
    <location>
        <begin position="65"/>
        <end position="78"/>
    </location>
</feature>
<protein>
    <recommendedName>
        <fullName>Pyocin-S2 immunity protein</fullName>
    </recommendedName>
</protein>
<evidence type="ECO:0000305" key="1"/>
<evidence type="ECO:0007829" key="2">
    <source>
        <dbReference type="PDB" id="4QKO"/>
    </source>
</evidence>
<name>IMM2_PSEAE</name>
<accession>Q06579</accession>
<dbReference type="EMBL" id="D12708">
    <property type="protein sequence ID" value="BAA02204.1"/>
    <property type="molecule type" value="Genomic_DNA"/>
</dbReference>
<dbReference type="EMBL" id="AE004091">
    <property type="protein sequence ID" value="AAG04540.1"/>
    <property type="molecule type" value="Genomic_DNA"/>
</dbReference>
<dbReference type="PIR" id="D36907">
    <property type="entry name" value="D36907"/>
</dbReference>
<dbReference type="RefSeq" id="NP_249842.1">
    <property type="nucleotide sequence ID" value="NC_002516.2"/>
</dbReference>
<dbReference type="PDB" id="4QKO">
    <property type="method" value="X-ray"/>
    <property type="resolution" value="1.80 A"/>
    <property type="chains" value="A/C/E/G=1-87"/>
</dbReference>
<dbReference type="PDBsum" id="4QKO"/>
<dbReference type="SMR" id="Q06579"/>
<dbReference type="STRING" id="208964.PA1151"/>
<dbReference type="PaxDb" id="208964-PA1151"/>
<dbReference type="GeneID" id="879819"/>
<dbReference type="KEGG" id="pae:PA1151"/>
<dbReference type="PATRIC" id="fig|208964.12.peg.1197"/>
<dbReference type="PseudoCAP" id="PA1151"/>
<dbReference type="HOGENOM" id="CLU_174792_0_0_6"/>
<dbReference type="InParanoid" id="Q06579"/>
<dbReference type="OrthoDB" id="6810874at2"/>
<dbReference type="PhylomeDB" id="Q06579"/>
<dbReference type="BioCyc" id="PAER208964:G1FZ6-1177-MONOMER"/>
<dbReference type="EvolutionaryTrace" id="Q06579"/>
<dbReference type="Proteomes" id="UP000002438">
    <property type="component" value="Chromosome"/>
</dbReference>
<dbReference type="GO" id="GO:0015643">
    <property type="term" value="F:toxic substance binding"/>
    <property type="evidence" value="ECO:0007669"/>
    <property type="project" value="InterPro"/>
</dbReference>
<dbReference type="GO" id="GO:0030153">
    <property type="term" value="P:bacteriocin immunity"/>
    <property type="evidence" value="ECO:0000314"/>
    <property type="project" value="PseudoCAP"/>
</dbReference>
<dbReference type="CDD" id="cd16363">
    <property type="entry name" value="Col_Im_like"/>
    <property type="match status" value="1"/>
</dbReference>
<dbReference type="FunFam" id="1.10.1200.20:FF:000001">
    <property type="entry name" value="Colicin-E9 immunity protein"/>
    <property type="match status" value="1"/>
</dbReference>
<dbReference type="Gene3D" id="1.10.1200.20">
    <property type="entry name" value="Colicin E immunity protein"/>
    <property type="match status" value="1"/>
</dbReference>
<dbReference type="InterPro" id="IPR035900">
    <property type="entry name" value="Colicin_E_sf"/>
</dbReference>
<dbReference type="InterPro" id="IPR000290">
    <property type="entry name" value="Colicin_pyocin"/>
</dbReference>
<dbReference type="Pfam" id="PF01320">
    <property type="entry name" value="Colicin_Pyocin"/>
    <property type="match status" value="1"/>
</dbReference>
<dbReference type="PRINTS" id="PR01299">
    <property type="entry name" value="PYOCIN"/>
</dbReference>
<dbReference type="SUPFAM" id="SSF47345">
    <property type="entry name" value="Colicin E immunity proteins"/>
    <property type="match status" value="1"/>
</dbReference>
<comment type="similarity">
    <text evidence="1">Belongs to the colicins ColE2/ColE8/ColE9 and pyocins S1/S2 family.</text>
</comment>
<proteinExistence type="evidence at protein level"/>
<organism>
    <name type="scientific">Pseudomonas aeruginosa (strain ATCC 15692 / DSM 22644 / CIP 104116 / JCM 14847 / LMG 12228 / 1C / PRS 101 / PAO1)</name>
    <dbReference type="NCBI Taxonomy" id="208964"/>
    <lineage>
        <taxon>Bacteria</taxon>
        <taxon>Pseudomonadati</taxon>
        <taxon>Pseudomonadota</taxon>
        <taxon>Gammaproteobacteria</taxon>
        <taxon>Pseudomonadales</taxon>
        <taxon>Pseudomonadaceae</taxon>
        <taxon>Pseudomonas</taxon>
    </lineage>
</organism>